<accession>Q66KM5</accession>
<keyword id="KW-0378">Hydrolase</keyword>
<keyword id="KW-0904">Protein phosphatase</keyword>
<keyword id="KW-1185">Reference proteome</keyword>
<dbReference type="EC" id="3.1.3.-"/>
<dbReference type="EMBL" id="BC080328">
    <property type="protein sequence ID" value="AAH80328.1"/>
    <property type="molecule type" value="mRNA"/>
</dbReference>
<dbReference type="RefSeq" id="NP_001008438.1">
    <property type="nucleotide sequence ID" value="NM_001008438.1"/>
</dbReference>
<dbReference type="RefSeq" id="XP_012814332.1">
    <property type="nucleotide sequence ID" value="XM_012958878.3"/>
</dbReference>
<dbReference type="SMR" id="Q66KM5"/>
<dbReference type="FunCoup" id="Q66KM5">
    <property type="interactions" value="2681"/>
</dbReference>
<dbReference type="STRING" id="8364.ENSXETP00000035786"/>
<dbReference type="PaxDb" id="8364-ENSXETP00000017145"/>
<dbReference type="DNASU" id="493278"/>
<dbReference type="GeneID" id="493278"/>
<dbReference type="KEGG" id="xtr:493278"/>
<dbReference type="AGR" id="Xenbase:XB-GENE-950101"/>
<dbReference type="CTD" id="51496"/>
<dbReference type="Xenbase" id="XB-GENE-950101">
    <property type="gene designation" value="ctdspl2"/>
</dbReference>
<dbReference type="eggNOG" id="KOG1605">
    <property type="taxonomic scope" value="Eukaryota"/>
</dbReference>
<dbReference type="HOGENOM" id="CLU_034042_4_0_1"/>
<dbReference type="InParanoid" id="Q66KM5"/>
<dbReference type="OMA" id="NQAIQVR"/>
<dbReference type="OrthoDB" id="277011at2759"/>
<dbReference type="PhylomeDB" id="Q66KM5"/>
<dbReference type="TreeFam" id="TF354278"/>
<dbReference type="Proteomes" id="UP000008143">
    <property type="component" value="Chromosome 3"/>
</dbReference>
<dbReference type="Bgee" id="ENSXETG00000007843">
    <property type="expression patterns" value="Expressed in 4-cell stage embryo and 14 other cell types or tissues"/>
</dbReference>
<dbReference type="GO" id="GO:0004721">
    <property type="term" value="F:phosphoprotein phosphatase activity"/>
    <property type="evidence" value="ECO:0007669"/>
    <property type="project" value="UniProtKB-KW"/>
</dbReference>
<dbReference type="CDD" id="cd07521">
    <property type="entry name" value="HAD_FCP1-like"/>
    <property type="match status" value="1"/>
</dbReference>
<dbReference type="FunFam" id="3.40.50.1000:FF:000015">
    <property type="entry name" value="CTD small phosphatase-like protein 2"/>
    <property type="match status" value="1"/>
</dbReference>
<dbReference type="Gene3D" id="3.40.50.1000">
    <property type="entry name" value="HAD superfamily/HAD-like"/>
    <property type="match status" value="1"/>
</dbReference>
<dbReference type="InterPro" id="IPR011948">
    <property type="entry name" value="Dullard_phosphatase"/>
</dbReference>
<dbReference type="InterPro" id="IPR004274">
    <property type="entry name" value="FCP1_dom"/>
</dbReference>
<dbReference type="InterPro" id="IPR036412">
    <property type="entry name" value="HAD-like_sf"/>
</dbReference>
<dbReference type="InterPro" id="IPR023214">
    <property type="entry name" value="HAD_sf"/>
</dbReference>
<dbReference type="InterPro" id="IPR050365">
    <property type="entry name" value="TIM50"/>
</dbReference>
<dbReference type="NCBIfam" id="TIGR02251">
    <property type="entry name" value="HIF-SF_euk"/>
    <property type="match status" value="1"/>
</dbReference>
<dbReference type="PANTHER" id="PTHR12210">
    <property type="entry name" value="DULLARD PROTEIN PHOSPHATASE"/>
    <property type="match status" value="1"/>
</dbReference>
<dbReference type="Pfam" id="PF03031">
    <property type="entry name" value="NIF"/>
    <property type="match status" value="1"/>
</dbReference>
<dbReference type="SMART" id="SM00577">
    <property type="entry name" value="CPDc"/>
    <property type="match status" value="1"/>
</dbReference>
<dbReference type="SUPFAM" id="SSF56784">
    <property type="entry name" value="HAD-like"/>
    <property type="match status" value="1"/>
</dbReference>
<dbReference type="PROSITE" id="PS50969">
    <property type="entry name" value="FCP1"/>
    <property type="match status" value="1"/>
</dbReference>
<organism>
    <name type="scientific">Xenopus tropicalis</name>
    <name type="common">Western clawed frog</name>
    <name type="synonym">Silurana tropicalis</name>
    <dbReference type="NCBI Taxonomy" id="8364"/>
    <lineage>
        <taxon>Eukaryota</taxon>
        <taxon>Metazoa</taxon>
        <taxon>Chordata</taxon>
        <taxon>Craniata</taxon>
        <taxon>Vertebrata</taxon>
        <taxon>Euteleostomi</taxon>
        <taxon>Amphibia</taxon>
        <taxon>Batrachia</taxon>
        <taxon>Anura</taxon>
        <taxon>Pipoidea</taxon>
        <taxon>Pipidae</taxon>
        <taxon>Xenopodinae</taxon>
        <taxon>Xenopus</taxon>
        <taxon>Silurana</taxon>
    </lineage>
</organism>
<name>CTSL2_XENTR</name>
<proteinExistence type="evidence at transcript level"/>
<reference key="1">
    <citation type="submission" date="2004-08" db="EMBL/GenBank/DDBJ databases">
        <authorList>
            <consortium name="NIH - Xenopus Gene Collection (XGC) project"/>
        </authorList>
    </citation>
    <scope>NUCLEOTIDE SEQUENCE [LARGE SCALE MRNA]</scope>
    <source>
        <tissue>Embryo</tissue>
    </source>
</reference>
<comment type="function">
    <text evidence="1">Probable phosphatase.</text>
</comment>
<comment type="similarity">
    <text evidence="4">Belongs to the CTDSPL2 family.</text>
</comment>
<feature type="chain" id="PRO_0000331472" description="CTD small phosphatase-like protein 2">
    <location>
        <begin position="1"/>
        <end position="466"/>
    </location>
</feature>
<feature type="domain" description="FCP1 homology" evidence="2">
    <location>
        <begin position="283"/>
        <end position="442"/>
    </location>
</feature>
<feature type="region of interest" description="Disordered" evidence="3">
    <location>
        <begin position="1"/>
        <end position="136"/>
    </location>
</feature>
<feature type="region of interest" description="Disordered" evidence="3">
    <location>
        <begin position="211"/>
        <end position="238"/>
    </location>
</feature>
<feature type="compositionally biased region" description="Acidic residues" evidence="3">
    <location>
        <begin position="30"/>
        <end position="39"/>
    </location>
</feature>
<feature type="compositionally biased region" description="Polar residues" evidence="3">
    <location>
        <begin position="50"/>
        <end position="62"/>
    </location>
</feature>
<feature type="compositionally biased region" description="Basic and acidic residues" evidence="3">
    <location>
        <begin position="63"/>
        <end position="82"/>
    </location>
</feature>
<protein>
    <recommendedName>
        <fullName>CTD small phosphatase-like protein 2</fullName>
        <shortName>CTDSP-like 2</shortName>
        <ecNumber>3.1.3.-</ecNumber>
    </recommendedName>
</protein>
<gene>
    <name type="primary">ctdspl2</name>
</gene>
<sequence>MRLRTRKGSPRSSHGAAGRTARCKRKHSEEDEEEESQLIEEDKLPKQETGLLSTIKNFIKGSTNKEDRENPAKRSRVERDLDNNLITSTPRTGDKPSKPIARVRRKSQVNGEATGYEVSQHMKQNGKLEDLPSTTSPPRTTLLGTIFSPVFNFFSPANKNGTSGSDSPGQAVEAEEIVKQLDMEKVDEFSTSTATNGASYPSLAAPVRSTASSWLEGTEDSPEREIPPLTAPVSPESGYSSAHAEAAYEEDWEVFDPYYFIKHVPPLTEEQLNRKPALPLKTRSTPEFSLVLDLDETLVHCSLNELEDAALTFPVLFQDVIYQVYVRLRPFFREFLERMSQIYEIILFTASKKVYADKLLNILDPKKRLVRHRLFREHCVCVQGNYIKDLNILGRDLSKTIIIDNSPQAFAYQLSNGIPIESWFMDKNDKELLKLVPFLENLVELNEDVRPHIRDRFRLHDCLPPD</sequence>
<evidence type="ECO:0000250" key="1"/>
<evidence type="ECO:0000255" key="2">
    <source>
        <dbReference type="PROSITE-ProRule" id="PRU00336"/>
    </source>
</evidence>
<evidence type="ECO:0000256" key="3">
    <source>
        <dbReference type="SAM" id="MobiDB-lite"/>
    </source>
</evidence>
<evidence type="ECO:0000305" key="4"/>